<name>ZN511_HUMAN</name>
<dbReference type="EMBL" id="AK091711">
    <property type="protein sequence ID" value="BAC03729.1"/>
    <property type="molecule type" value="mRNA"/>
</dbReference>
<dbReference type="EMBL" id="AK292380">
    <property type="protein sequence ID" value="BAF85069.1"/>
    <property type="molecule type" value="mRNA"/>
</dbReference>
<dbReference type="EMBL" id="AL360181">
    <property type="status" value="NOT_ANNOTATED_CDS"/>
    <property type="molecule type" value="Genomic_DNA"/>
</dbReference>
<dbReference type="EMBL" id="CH471211">
    <property type="protein sequence ID" value="EAW61333.1"/>
    <property type="molecule type" value="Genomic_DNA"/>
</dbReference>
<dbReference type="EMBL" id="BC015139">
    <property type="protein sequence ID" value="AAH15139.1"/>
    <property type="status" value="ALT_INIT"/>
    <property type="molecule type" value="mRNA"/>
</dbReference>
<dbReference type="EMBL" id="BC019897">
    <property type="protein sequence ID" value="AAH19897.1"/>
    <property type="molecule type" value="mRNA"/>
</dbReference>
<dbReference type="CCDS" id="CCDS7677.1">
    <molecule id="Q8NB15-2"/>
</dbReference>
<dbReference type="RefSeq" id="NP_665805.2">
    <molecule id="Q8NB15-2"/>
    <property type="nucleotide sequence ID" value="NM_145806.3"/>
</dbReference>
<dbReference type="BioGRID" id="125611">
    <property type="interactions" value="41"/>
</dbReference>
<dbReference type="FunCoup" id="Q8NB15">
    <property type="interactions" value="309"/>
</dbReference>
<dbReference type="IntAct" id="Q8NB15">
    <property type="interactions" value="30"/>
</dbReference>
<dbReference type="STRING" id="9606.ENSP00000355251"/>
<dbReference type="iPTMnet" id="Q8NB15"/>
<dbReference type="PhosphoSitePlus" id="Q8NB15"/>
<dbReference type="BioMuta" id="ZNF511"/>
<dbReference type="DMDM" id="74760090"/>
<dbReference type="jPOST" id="Q8NB15"/>
<dbReference type="MassIVE" id="Q8NB15"/>
<dbReference type="PaxDb" id="9606-ENSP00000355251"/>
<dbReference type="PeptideAtlas" id="Q8NB15"/>
<dbReference type="ProteomicsDB" id="72716">
    <molecule id="Q8NB15-1"/>
</dbReference>
<dbReference type="ProteomicsDB" id="72717">
    <molecule id="Q8NB15-2"/>
</dbReference>
<dbReference type="Pumba" id="Q8NB15"/>
<dbReference type="Antibodypedia" id="32647">
    <property type="antibodies" value="57 antibodies from 15 providers"/>
</dbReference>
<dbReference type="DNASU" id="118472"/>
<dbReference type="Ensembl" id="ENST00000359035.4">
    <molecule id="Q8NB15-1"/>
    <property type="protein sequence ID" value="ENSP00000351929.3"/>
    <property type="gene ID" value="ENSG00000198546.15"/>
</dbReference>
<dbReference type="Ensembl" id="ENST00000361518.10">
    <molecule id="Q8NB15-2"/>
    <property type="protein sequence ID" value="ENSP00000355251.5"/>
    <property type="gene ID" value="ENSG00000198546.15"/>
</dbReference>
<dbReference type="GeneID" id="118472"/>
<dbReference type="KEGG" id="hsa:118472"/>
<dbReference type="MANE-Select" id="ENST00000361518.10">
    <property type="protein sequence ID" value="ENSP00000355251.5"/>
    <property type="RefSeq nucleotide sequence ID" value="NM_145806.4"/>
    <property type="RefSeq protein sequence ID" value="NP_665805.2"/>
</dbReference>
<dbReference type="UCSC" id="uc001lmj.2">
    <molecule id="Q8NB15-2"/>
    <property type="organism name" value="human"/>
</dbReference>
<dbReference type="AGR" id="HGNC:28445"/>
<dbReference type="CTD" id="118472"/>
<dbReference type="GeneCards" id="ZNF511"/>
<dbReference type="HGNC" id="HGNC:28445">
    <property type="gene designation" value="ZNF511"/>
</dbReference>
<dbReference type="HPA" id="ENSG00000198546">
    <property type="expression patterns" value="Low tissue specificity"/>
</dbReference>
<dbReference type="neXtProt" id="NX_Q8NB15"/>
<dbReference type="OpenTargets" id="ENSG00000198546"/>
<dbReference type="PharmGKB" id="PA134940031"/>
<dbReference type="VEuPathDB" id="HostDB:ENSG00000198546"/>
<dbReference type="eggNOG" id="KOG4173">
    <property type="taxonomic scope" value="Eukaryota"/>
</dbReference>
<dbReference type="GeneTree" id="ENSGT00390000011381"/>
<dbReference type="HOGENOM" id="CLU_092647_0_0_1"/>
<dbReference type="InParanoid" id="Q8NB15"/>
<dbReference type="OMA" id="LEDYQHH"/>
<dbReference type="OrthoDB" id="18440at2759"/>
<dbReference type="PAN-GO" id="Q8NB15">
    <property type="GO annotations" value="0 GO annotations based on evolutionary models"/>
</dbReference>
<dbReference type="PhylomeDB" id="Q8NB15"/>
<dbReference type="TreeFam" id="TF323277"/>
<dbReference type="PathwayCommons" id="Q8NB15"/>
<dbReference type="SignaLink" id="Q8NB15"/>
<dbReference type="SIGNOR" id="Q8NB15"/>
<dbReference type="BioGRID-ORCS" id="118472">
    <property type="hits" value="114 hits in 1160 CRISPR screens"/>
</dbReference>
<dbReference type="ChiTaRS" id="ZNF511">
    <property type="organism name" value="human"/>
</dbReference>
<dbReference type="GenomeRNAi" id="118472"/>
<dbReference type="Pharos" id="Q8NB15">
    <property type="development level" value="Tdark"/>
</dbReference>
<dbReference type="PRO" id="PR:Q8NB15"/>
<dbReference type="Proteomes" id="UP000005640">
    <property type="component" value="Chromosome 10"/>
</dbReference>
<dbReference type="RNAct" id="Q8NB15">
    <property type="molecule type" value="protein"/>
</dbReference>
<dbReference type="Bgee" id="ENSG00000198546">
    <property type="expression patterns" value="Expressed in hindlimb stylopod muscle and 183 other cell types or tissues"/>
</dbReference>
<dbReference type="GO" id="GO:0005634">
    <property type="term" value="C:nucleus"/>
    <property type="evidence" value="ECO:0007669"/>
    <property type="project" value="UniProtKB-SubCell"/>
</dbReference>
<dbReference type="GO" id="GO:0003677">
    <property type="term" value="F:DNA binding"/>
    <property type="evidence" value="ECO:0007669"/>
    <property type="project" value="UniProtKB-KW"/>
</dbReference>
<dbReference type="GO" id="GO:0003700">
    <property type="term" value="F:DNA-binding transcription factor activity"/>
    <property type="evidence" value="ECO:0000303"/>
    <property type="project" value="ARUK-UCL"/>
</dbReference>
<dbReference type="GO" id="GO:0008270">
    <property type="term" value="F:zinc ion binding"/>
    <property type="evidence" value="ECO:0007669"/>
    <property type="project" value="UniProtKB-KW"/>
</dbReference>
<dbReference type="Gene3D" id="3.30.160.60">
    <property type="entry name" value="Classic Zinc Finger"/>
    <property type="match status" value="1"/>
</dbReference>
<dbReference type="InterPro" id="IPR039258">
    <property type="entry name" value="ZNF511"/>
</dbReference>
<dbReference type="InterPro" id="IPR036236">
    <property type="entry name" value="Znf_C2H2_sf"/>
</dbReference>
<dbReference type="InterPro" id="IPR013087">
    <property type="entry name" value="Znf_C2H2_type"/>
</dbReference>
<dbReference type="PANTHER" id="PTHR21354">
    <property type="entry name" value="ZINC FINGER PROTEIN 511"/>
    <property type="match status" value="1"/>
</dbReference>
<dbReference type="PANTHER" id="PTHR21354:SF0">
    <property type="entry name" value="ZINC FINGER PROTEIN 511"/>
    <property type="match status" value="1"/>
</dbReference>
<dbReference type="SMART" id="SM00355">
    <property type="entry name" value="ZnF_C2H2"/>
    <property type="match status" value="3"/>
</dbReference>
<dbReference type="SUPFAM" id="SSF57667">
    <property type="entry name" value="beta-beta-alpha zinc fingers"/>
    <property type="match status" value="1"/>
</dbReference>
<dbReference type="PROSITE" id="PS00028">
    <property type="entry name" value="ZINC_FINGER_C2H2_1"/>
    <property type="match status" value="3"/>
</dbReference>
<sequence length="252" mass="28265">MQLPPALCARLAAGPGAAEPLPVERDPAAGAAPFRFVARPVRFPREHQFFEDGDVQRHLYLQDVIMQVADVPEKPRVPAFACQVAGCCQVFDALDDYEHHYHTLHGNVCSFCKRAFPSGHLLDAHILEWHDSLFQILSERQDMYQCLVEGCTEKFKTSRDRKDHMVRMHLYPADFRFDKPKKSRSPASAEAPGDSGERSEGEAMEICSEPVAASPAPAGERRIYRHRIPSTICFGQGAARGFKSNKKKTKQC</sequence>
<evidence type="ECO:0000256" key="1">
    <source>
        <dbReference type="SAM" id="MobiDB-lite"/>
    </source>
</evidence>
<evidence type="ECO:0000305" key="2"/>
<evidence type="ECO:0000312" key="3">
    <source>
        <dbReference type="HGNC" id="HGNC:28445"/>
    </source>
</evidence>
<evidence type="ECO:0007744" key="4">
    <source>
    </source>
</evidence>
<comment type="function">
    <text evidence="2">May be involved in transcriptional regulation.</text>
</comment>
<comment type="interaction">
    <interactant intactId="EBI-10269136">
        <id>Q8NB15</id>
    </interactant>
    <interactant intactId="EBI-12006120">
        <id>A0A087WZT3</id>
        <label>BOLA2-SMG1P6</label>
    </interactant>
    <organismsDiffer>false</organismsDiffer>
    <experiments>3</experiments>
</comment>
<comment type="interaction">
    <interactant intactId="EBI-10269136">
        <id>Q8NB15</id>
    </interactant>
    <interactant intactId="EBI-749051">
        <id>Q8IYR0</id>
        <label>CFAP206</label>
    </interactant>
    <organismsDiffer>false</organismsDiffer>
    <experiments>3</experiments>
</comment>
<comment type="interaction">
    <interactant intactId="EBI-10269136">
        <id>Q8NB15</id>
    </interactant>
    <interactant intactId="EBI-11980535">
        <id>P51800-3</id>
        <label>CLCNKA</label>
    </interactant>
    <organismsDiffer>false</organismsDiffer>
    <experiments>3</experiments>
</comment>
<comment type="interaction">
    <interactant intactId="EBI-10269136">
        <id>Q8NB15</id>
    </interactant>
    <interactant intactId="EBI-744099">
        <id>Q9H0I2</id>
        <label>ENKD1</label>
    </interactant>
    <organismsDiffer>false</organismsDiffer>
    <experiments>3</experiments>
</comment>
<comment type="interaction">
    <interactant intactId="EBI-10269136">
        <id>Q8NB15</id>
    </interactant>
    <interactant intactId="EBI-7116203">
        <id>O75031</id>
        <label>HSF2BP</label>
    </interactant>
    <organismsDiffer>false</organismsDiffer>
    <experiments>3</experiments>
</comment>
<comment type="interaction">
    <interactant intactId="EBI-10269136">
        <id>Q8NB15</id>
    </interactant>
    <interactant intactId="EBI-3906896">
        <id>P61371</id>
        <label>ISL1</label>
    </interactant>
    <organismsDiffer>false</organismsDiffer>
    <experiments>7</experiments>
</comment>
<comment type="interaction">
    <interactant intactId="EBI-10269136">
        <id>Q8NB15</id>
    </interactant>
    <interactant intactId="EBI-399080">
        <id>Q92993</id>
        <label>KAT5</label>
    </interactant>
    <organismsDiffer>false</organismsDiffer>
    <experiments>3</experiments>
</comment>
<comment type="interaction">
    <interactant intactId="EBI-10269136">
        <id>Q8NB15</id>
    </interactant>
    <interactant intactId="EBI-12179869">
        <id>P50458</id>
        <label>LHX2</label>
    </interactant>
    <organismsDiffer>false</organismsDiffer>
    <experiments>3</experiments>
</comment>
<comment type="interaction">
    <interactant intactId="EBI-10269136">
        <id>Q8NB15</id>
    </interactant>
    <interactant intactId="EBI-8639312">
        <id>P25800</id>
        <label>LMO1</label>
    </interactant>
    <organismsDiffer>false</organismsDiffer>
    <experiments>6</experiments>
</comment>
<comment type="interaction">
    <interactant intactId="EBI-10269136">
        <id>Q8NB15</id>
    </interactant>
    <interactant intactId="EBI-77889">
        <id>Q9UI95</id>
        <label>MAD2L2</label>
    </interactant>
    <organismsDiffer>false</organismsDiffer>
    <experiments>3</experiments>
</comment>
<comment type="interaction">
    <interactant intactId="EBI-10269136">
        <id>Q8NB15</id>
    </interactant>
    <interactant intactId="EBI-741158">
        <id>Q96HA8</id>
        <label>NTAQ1</label>
    </interactant>
    <organismsDiffer>false</organismsDiffer>
    <experiments>3</experiments>
</comment>
<comment type="interaction">
    <interactant intactId="EBI-10269136">
        <id>Q8NB15</id>
    </interactant>
    <interactant intactId="EBI-748391">
        <id>Q9BWG6</id>
        <label>SCNM1</label>
    </interactant>
    <organismsDiffer>false</organismsDiffer>
    <experiments>3</experiments>
</comment>
<comment type="interaction">
    <interactant intactId="EBI-10269136">
        <id>Q8NB15</id>
    </interactant>
    <interactant intactId="EBI-358489">
        <id>Q96GM5</id>
        <label>SMARCD1</label>
    </interactant>
    <organismsDiffer>false</organismsDiffer>
    <experiments>3</experiments>
</comment>
<comment type="interaction">
    <interactant intactId="EBI-10269136">
        <id>Q8NB15</id>
    </interactant>
    <interactant intactId="EBI-746174">
        <id>Q96DC7</id>
        <label>TMCO6</label>
    </interactant>
    <organismsDiffer>false</organismsDiffer>
    <experiments>8</experiments>
</comment>
<comment type="subcellular location">
    <subcellularLocation>
        <location evidence="2">Nucleus</location>
    </subcellularLocation>
</comment>
<comment type="alternative products">
    <event type="alternative splicing"/>
    <isoform>
        <id>Q8NB15-2</id>
        <name>2</name>
        <sequence type="displayed"/>
    </isoform>
    <isoform>
        <id>Q8NB15-1</id>
        <name>1</name>
        <sequence type="described" ref="VSP_059997"/>
    </isoform>
</comment>
<comment type="similarity">
    <text evidence="2">Belongs to the krueppel C2H2-type zinc-finger protein family.</text>
</comment>
<comment type="sequence caution" evidence="2">
    <conflict type="erroneous initiation">
        <sequence resource="EMBL-CDS" id="AAH15139"/>
    </conflict>
    <text>Extended N-terminus.</text>
</comment>
<feature type="chain" id="PRO_0000047629" description="Zinc finger protein 511">
    <location>
        <begin position="1"/>
        <end position="252"/>
    </location>
</feature>
<feature type="zinc finger region" description="C2H2-type 1">
    <location>
        <begin position="80"/>
        <end position="105"/>
    </location>
</feature>
<feature type="zinc finger region" description="C2H2-type 2">
    <location>
        <begin position="107"/>
        <end position="130"/>
    </location>
</feature>
<feature type="zinc finger region" description="C2H2-type 3">
    <location>
        <begin position="144"/>
        <end position="169"/>
    </location>
</feature>
<feature type="region of interest" description="Disordered" evidence="1">
    <location>
        <begin position="177"/>
        <end position="221"/>
    </location>
</feature>
<feature type="modified residue" description="Omega-N-methylarginine" evidence="4">
    <location>
        <position position="240"/>
    </location>
</feature>
<feature type="splice variant" id="VSP_059997" description="In isoform 1.">
    <original>IPSTICFGQGAARGFKSNKKKTKQC</original>
    <variation>SVSELFLKPVLNMCSVLRILGCTWAAALLILNSER</variation>
    <location>
        <begin position="228"/>
        <end position="252"/>
    </location>
</feature>
<protein>
    <recommendedName>
        <fullName evidence="2">Zinc finger protein 511</fullName>
    </recommendedName>
</protein>
<keyword id="KW-0025">Alternative splicing</keyword>
<keyword id="KW-0238">DNA-binding</keyword>
<keyword id="KW-0479">Metal-binding</keyword>
<keyword id="KW-0488">Methylation</keyword>
<keyword id="KW-0539">Nucleus</keyword>
<keyword id="KW-1267">Proteomics identification</keyword>
<keyword id="KW-1185">Reference proteome</keyword>
<keyword id="KW-0677">Repeat</keyword>
<keyword id="KW-0804">Transcription</keyword>
<keyword id="KW-0805">Transcription regulation</keyword>
<keyword id="KW-0862">Zinc</keyword>
<keyword id="KW-0863">Zinc-finger</keyword>
<gene>
    <name evidence="3" type="primary">ZNF511</name>
</gene>
<reference key="1">
    <citation type="journal article" date="2004" name="Nat. Genet.">
        <title>Complete sequencing and characterization of 21,243 full-length human cDNAs.</title>
        <authorList>
            <person name="Ota T."/>
            <person name="Suzuki Y."/>
            <person name="Nishikawa T."/>
            <person name="Otsuki T."/>
            <person name="Sugiyama T."/>
            <person name="Irie R."/>
            <person name="Wakamatsu A."/>
            <person name="Hayashi K."/>
            <person name="Sato H."/>
            <person name="Nagai K."/>
            <person name="Kimura K."/>
            <person name="Makita H."/>
            <person name="Sekine M."/>
            <person name="Obayashi M."/>
            <person name="Nishi T."/>
            <person name="Shibahara T."/>
            <person name="Tanaka T."/>
            <person name="Ishii S."/>
            <person name="Yamamoto J."/>
            <person name="Saito K."/>
            <person name="Kawai Y."/>
            <person name="Isono Y."/>
            <person name="Nakamura Y."/>
            <person name="Nagahari K."/>
            <person name="Murakami K."/>
            <person name="Yasuda T."/>
            <person name="Iwayanagi T."/>
            <person name="Wagatsuma M."/>
            <person name="Shiratori A."/>
            <person name="Sudo H."/>
            <person name="Hosoiri T."/>
            <person name="Kaku Y."/>
            <person name="Kodaira H."/>
            <person name="Kondo H."/>
            <person name="Sugawara M."/>
            <person name="Takahashi M."/>
            <person name="Kanda K."/>
            <person name="Yokoi T."/>
            <person name="Furuya T."/>
            <person name="Kikkawa E."/>
            <person name="Omura Y."/>
            <person name="Abe K."/>
            <person name="Kamihara K."/>
            <person name="Katsuta N."/>
            <person name="Sato K."/>
            <person name="Tanikawa M."/>
            <person name="Yamazaki M."/>
            <person name="Ninomiya K."/>
            <person name="Ishibashi T."/>
            <person name="Yamashita H."/>
            <person name="Murakawa K."/>
            <person name="Fujimori K."/>
            <person name="Tanai H."/>
            <person name="Kimata M."/>
            <person name="Watanabe M."/>
            <person name="Hiraoka S."/>
            <person name="Chiba Y."/>
            <person name="Ishida S."/>
            <person name="Ono Y."/>
            <person name="Takiguchi S."/>
            <person name="Watanabe S."/>
            <person name="Yosida M."/>
            <person name="Hotuta T."/>
            <person name="Kusano J."/>
            <person name="Kanehori K."/>
            <person name="Takahashi-Fujii A."/>
            <person name="Hara H."/>
            <person name="Tanase T.-O."/>
            <person name="Nomura Y."/>
            <person name="Togiya S."/>
            <person name="Komai F."/>
            <person name="Hara R."/>
            <person name="Takeuchi K."/>
            <person name="Arita M."/>
            <person name="Imose N."/>
            <person name="Musashino K."/>
            <person name="Yuuki H."/>
            <person name="Oshima A."/>
            <person name="Sasaki N."/>
            <person name="Aotsuka S."/>
            <person name="Yoshikawa Y."/>
            <person name="Matsunawa H."/>
            <person name="Ichihara T."/>
            <person name="Shiohata N."/>
            <person name="Sano S."/>
            <person name="Moriya S."/>
            <person name="Momiyama H."/>
            <person name="Satoh N."/>
            <person name="Takami S."/>
            <person name="Terashima Y."/>
            <person name="Suzuki O."/>
            <person name="Nakagawa S."/>
            <person name="Senoh A."/>
            <person name="Mizoguchi H."/>
            <person name="Goto Y."/>
            <person name="Shimizu F."/>
            <person name="Wakebe H."/>
            <person name="Hishigaki H."/>
            <person name="Watanabe T."/>
            <person name="Sugiyama A."/>
            <person name="Takemoto M."/>
            <person name="Kawakami B."/>
            <person name="Yamazaki M."/>
            <person name="Watanabe K."/>
            <person name="Kumagai A."/>
            <person name="Itakura S."/>
            <person name="Fukuzumi Y."/>
            <person name="Fujimori Y."/>
            <person name="Komiyama M."/>
            <person name="Tashiro H."/>
            <person name="Tanigami A."/>
            <person name="Fujiwara T."/>
            <person name="Ono T."/>
            <person name="Yamada K."/>
            <person name="Fujii Y."/>
            <person name="Ozaki K."/>
            <person name="Hirao M."/>
            <person name="Ohmori Y."/>
            <person name="Kawabata A."/>
            <person name="Hikiji T."/>
            <person name="Kobatake N."/>
            <person name="Inagaki H."/>
            <person name="Ikema Y."/>
            <person name="Okamoto S."/>
            <person name="Okitani R."/>
            <person name="Kawakami T."/>
            <person name="Noguchi S."/>
            <person name="Itoh T."/>
            <person name="Shigeta K."/>
            <person name="Senba T."/>
            <person name="Matsumura K."/>
            <person name="Nakajima Y."/>
            <person name="Mizuno T."/>
            <person name="Morinaga M."/>
            <person name="Sasaki M."/>
            <person name="Togashi T."/>
            <person name="Oyama M."/>
            <person name="Hata H."/>
            <person name="Watanabe M."/>
            <person name="Komatsu T."/>
            <person name="Mizushima-Sugano J."/>
            <person name="Satoh T."/>
            <person name="Shirai Y."/>
            <person name="Takahashi Y."/>
            <person name="Nakagawa K."/>
            <person name="Okumura K."/>
            <person name="Nagase T."/>
            <person name="Nomura N."/>
            <person name="Kikuchi H."/>
            <person name="Masuho Y."/>
            <person name="Yamashita R."/>
            <person name="Nakai K."/>
            <person name="Yada T."/>
            <person name="Nakamura Y."/>
            <person name="Ohara O."/>
            <person name="Isogai T."/>
            <person name="Sugano S."/>
        </authorList>
    </citation>
    <scope>NUCLEOTIDE SEQUENCE [LARGE SCALE MRNA] (ISOFORM 1)</scope>
    <source>
        <tissue>Chondrocyte</tissue>
        <tissue>Testis</tissue>
    </source>
</reference>
<reference key="2">
    <citation type="journal article" date="2004" name="Nature">
        <title>The DNA sequence and comparative analysis of human chromosome 10.</title>
        <authorList>
            <person name="Deloukas P."/>
            <person name="Earthrowl M.E."/>
            <person name="Grafham D.V."/>
            <person name="Rubenfield M."/>
            <person name="French L."/>
            <person name="Steward C.A."/>
            <person name="Sims S.K."/>
            <person name="Jones M.C."/>
            <person name="Searle S."/>
            <person name="Scott C."/>
            <person name="Howe K."/>
            <person name="Hunt S.E."/>
            <person name="Andrews T.D."/>
            <person name="Gilbert J.G.R."/>
            <person name="Swarbreck D."/>
            <person name="Ashurst J.L."/>
            <person name="Taylor A."/>
            <person name="Battles J."/>
            <person name="Bird C.P."/>
            <person name="Ainscough R."/>
            <person name="Almeida J.P."/>
            <person name="Ashwell R.I.S."/>
            <person name="Ambrose K.D."/>
            <person name="Babbage A.K."/>
            <person name="Bagguley C.L."/>
            <person name="Bailey J."/>
            <person name="Banerjee R."/>
            <person name="Bates K."/>
            <person name="Beasley H."/>
            <person name="Bray-Allen S."/>
            <person name="Brown A.J."/>
            <person name="Brown J.Y."/>
            <person name="Burford D.C."/>
            <person name="Burrill W."/>
            <person name="Burton J."/>
            <person name="Cahill P."/>
            <person name="Camire D."/>
            <person name="Carter N.P."/>
            <person name="Chapman J.C."/>
            <person name="Clark S.Y."/>
            <person name="Clarke G."/>
            <person name="Clee C.M."/>
            <person name="Clegg S."/>
            <person name="Corby N."/>
            <person name="Coulson A."/>
            <person name="Dhami P."/>
            <person name="Dutta I."/>
            <person name="Dunn M."/>
            <person name="Faulkner L."/>
            <person name="Frankish A."/>
            <person name="Frankland J.A."/>
            <person name="Garner P."/>
            <person name="Garnett J."/>
            <person name="Gribble S."/>
            <person name="Griffiths C."/>
            <person name="Grocock R."/>
            <person name="Gustafson E."/>
            <person name="Hammond S."/>
            <person name="Harley J.L."/>
            <person name="Hart E."/>
            <person name="Heath P.D."/>
            <person name="Ho T.P."/>
            <person name="Hopkins B."/>
            <person name="Horne J."/>
            <person name="Howden P.J."/>
            <person name="Huckle E."/>
            <person name="Hynds C."/>
            <person name="Johnson C."/>
            <person name="Johnson D."/>
            <person name="Kana A."/>
            <person name="Kay M."/>
            <person name="Kimberley A.M."/>
            <person name="Kershaw J.K."/>
            <person name="Kokkinaki M."/>
            <person name="Laird G.K."/>
            <person name="Lawlor S."/>
            <person name="Lee H.M."/>
            <person name="Leongamornlert D.A."/>
            <person name="Laird G."/>
            <person name="Lloyd C."/>
            <person name="Lloyd D.M."/>
            <person name="Loveland J."/>
            <person name="Lovell J."/>
            <person name="McLaren S."/>
            <person name="McLay K.E."/>
            <person name="McMurray A."/>
            <person name="Mashreghi-Mohammadi M."/>
            <person name="Matthews L."/>
            <person name="Milne S."/>
            <person name="Nickerson T."/>
            <person name="Nguyen M."/>
            <person name="Overton-Larty E."/>
            <person name="Palmer S.A."/>
            <person name="Pearce A.V."/>
            <person name="Peck A.I."/>
            <person name="Pelan S."/>
            <person name="Phillimore B."/>
            <person name="Porter K."/>
            <person name="Rice C.M."/>
            <person name="Rogosin A."/>
            <person name="Ross M.T."/>
            <person name="Sarafidou T."/>
            <person name="Sehra H.K."/>
            <person name="Shownkeen R."/>
            <person name="Skuce C.D."/>
            <person name="Smith M."/>
            <person name="Standring L."/>
            <person name="Sycamore N."/>
            <person name="Tester J."/>
            <person name="Thorpe A."/>
            <person name="Torcasso W."/>
            <person name="Tracey A."/>
            <person name="Tromans A."/>
            <person name="Tsolas J."/>
            <person name="Wall M."/>
            <person name="Walsh J."/>
            <person name="Wang H."/>
            <person name="Weinstock K."/>
            <person name="West A.P."/>
            <person name="Willey D.L."/>
            <person name="Whitehead S.L."/>
            <person name="Wilming L."/>
            <person name="Wray P.W."/>
            <person name="Young L."/>
            <person name="Chen Y."/>
            <person name="Lovering R.C."/>
            <person name="Moschonas N.K."/>
            <person name="Siebert R."/>
            <person name="Fechtel K."/>
            <person name="Bentley D."/>
            <person name="Durbin R.M."/>
            <person name="Hubbard T."/>
            <person name="Doucette-Stamm L."/>
            <person name="Beck S."/>
            <person name="Smith D.R."/>
            <person name="Rogers J."/>
        </authorList>
    </citation>
    <scope>NUCLEOTIDE SEQUENCE [LARGE SCALE GENOMIC DNA]</scope>
</reference>
<reference key="3">
    <citation type="submission" date="2005-09" db="EMBL/GenBank/DDBJ databases">
        <authorList>
            <person name="Mural R.J."/>
            <person name="Istrail S."/>
            <person name="Sutton G.G."/>
            <person name="Florea L."/>
            <person name="Halpern A.L."/>
            <person name="Mobarry C.M."/>
            <person name="Lippert R."/>
            <person name="Walenz B."/>
            <person name="Shatkay H."/>
            <person name="Dew I."/>
            <person name="Miller J.R."/>
            <person name="Flanigan M.J."/>
            <person name="Edwards N.J."/>
            <person name="Bolanos R."/>
            <person name="Fasulo D."/>
            <person name="Halldorsson B.V."/>
            <person name="Hannenhalli S."/>
            <person name="Turner R."/>
            <person name="Yooseph S."/>
            <person name="Lu F."/>
            <person name="Nusskern D.R."/>
            <person name="Shue B.C."/>
            <person name="Zheng X.H."/>
            <person name="Zhong F."/>
            <person name="Delcher A.L."/>
            <person name="Huson D.H."/>
            <person name="Kravitz S.A."/>
            <person name="Mouchard L."/>
            <person name="Reinert K."/>
            <person name="Remington K.A."/>
            <person name="Clark A.G."/>
            <person name="Waterman M.S."/>
            <person name="Eichler E.E."/>
            <person name="Adams M.D."/>
            <person name="Hunkapiller M.W."/>
            <person name="Myers E.W."/>
            <person name="Venter J.C."/>
        </authorList>
    </citation>
    <scope>NUCLEOTIDE SEQUENCE [LARGE SCALE GENOMIC DNA]</scope>
</reference>
<reference key="4">
    <citation type="journal article" date="2004" name="Genome Res.">
        <title>The status, quality, and expansion of the NIH full-length cDNA project: the Mammalian Gene Collection (MGC).</title>
        <authorList>
            <consortium name="The MGC Project Team"/>
        </authorList>
    </citation>
    <scope>NUCLEOTIDE SEQUENCE [LARGE SCALE MRNA] (ISOFORM 2)</scope>
    <source>
        <tissue>Brain</tissue>
        <tissue>Cervix</tissue>
    </source>
</reference>
<reference key="5">
    <citation type="journal article" date="2014" name="Mol. Cell. Proteomics">
        <title>Immunoaffinity enrichment and mass spectrometry analysis of protein methylation.</title>
        <authorList>
            <person name="Guo A."/>
            <person name="Gu H."/>
            <person name="Zhou J."/>
            <person name="Mulhern D."/>
            <person name="Wang Y."/>
            <person name="Lee K.A."/>
            <person name="Yang V."/>
            <person name="Aguiar M."/>
            <person name="Kornhauser J."/>
            <person name="Jia X."/>
            <person name="Ren J."/>
            <person name="Beausoleil S.A."/>
            <person name="Silva J.C."/>
            <person name="Vemulapalli V."/>
            <person name="Bedford M.T."/>
            <person name="Comb M.J."/>
        </authorList>
    </citation>
    <scope>METHYLATION [LARGE SCALE ANALYSIS] AT ARG-240 (ISOFORM 2)</scope>
    <scope>IDENTIFICATION BY MASS SPECTROMETRY [LARGE SCALE ANALYSIS]</scope>
    <source>
        <tissue>Colon carcinoma</tissue>
    </source>
</reference>
<organism>
    <name type="scientific">Homo sapiens</name>
    <name type="common">Human</name>
    <dbReference type="NCBI Taxonomy" id="9606"/>
    <lineage>
        <taxon>Eukaryota</taxon>
        <taxon>Metazoa</taxon>
        <taxon>Chordata</taxon>
        <taxon>Craniata</taxon>
        <taxon>Vertebrata</taxon>
        <taxon>Euteleostomi</taxon>
        <taxon>Mammalia</taxon>
        <taxon>Eutheria</taxon>
        <taxon>Euarchontoglires</taxon>
        <taxon>Primates</taxon>
        <taxon>Haplorrhini</taxon>
        <taxon>Catarrhini</taxon>
        <taxon>Hominidae</taxon>
        <taxon>Homo</taxon>
    </lineage>
</organism>
<proteinExistence type="evidence at protein level"/>
<accession>Q8NB15</accession>
<accession>A8K8L5</accession>
<accession>Q8WUP1</accession>
<accession>Q96BV2</accession>